<keyword id="KW-0125">Carotenoid biosynthesis</keyword>
<keyword id="KW-0150">Chloroplast</keyword>
<keyword id="KW-0957">Chromoplast</keyword>
<keyword id="KW-0472">Membrane</keyword>
<keyword id="KW-0560">Oxidoreductase</keyword>
<keyword id="KW-0934">Plastid</keyword>
<keyword id="KW-0809">Transit peptide</keyword>
<protein>
    <recommendedName>
        <fullName evidence="7">15-cis-phytoene desaturase, chloroplastic/chromoplastic</fullName>
        <ecNumber evidence="1">1.3.5.5</ecNumber>
    </recommendedName>
    <alternativeName>
        <fullName evidence="7">Phytoene dehydrogenase</fullName>
        <shortName evidence="6">OgPDS</shortName>
    </alternativeName>
    <alternativeName>
        <fullName>Phytoene desaturase</fullName>
    </alternativeName>
</protein>
<organism>
    <name type="scientific">Oncidium hybrid cultivar</name>
    <name type="common">Orchid</name>
    <dbReference type="NCBI Taxonomy" id="141207"/>
    <lineage>
        <taxon>Eukaryota</taxon>
        <taxon>Viridiplantae</taxon>
        <taxon>Streptophyta</taxon>
        <taxon>Embryophyta</taxon>
        <taxon>Tracheophyta</taxon>
        <taxon>Spermatophyta</taxon>
        <taxon>Magnoliopsida</taxon>
        <taxon>Liliopsida</taxon>
        <taxon>Asparagales</taxon>
        <taxon>Orchidaceae</taxon>
        <taxon>Epidendroideae</taxon>
        <taxon>Cymbidieae</taxon>
        <taxon>Oncidiinae</taxon>
        <taxon>Oncidium</taxon>
    </lineage>
</organism>
<evidence type="ECO:0000250" key="1">
    <source>
        <dbReference type="UniProtKB" id="A2XDA1"/>
    </source>
</evidence>
<evidence type="ECO:0000250" key="2">
    <source>
        <dbReference type="UniProtKB" id="Q40406"/>
    </source>
</evidence>
<evidence type="ECO:0000255" key="3"/>
<evidence type="ECO:0000269" key="4">
    <source>
    </source>
</evidence>
<evidence type="ECO:0000269" key="5">
    <source>
    </source>
</evidence>
<evidence type="ECO:0000303" key="6">
    <source>
    </source>
</evidence>
<evidence type="ECO:0000305" key="7"/>
<comment type="function">
    <text evidence="1">Converts phytoene into zeta-carotene via the intermediary of phytofluene by the symmetrical introduction of two double bonds at the C-11 and C-11' positions of phytoene with a concomitant isomerization of two neighboring double bonds at the C9 and C9' positions from trans to cis.</text>
</comment>
<comment type="catalytic activity">
    <reaction evidence="1">
        <text>2 a plastoquinone + 15-cis-phytoene = 9,9',15-tri-cis-zeta-carotene + 2 a plastoquinol</text>
        <dbReference type="Rhea" id="RHEA:30287"/>
        <dbReference type="Rhea" id="RHEA-COMP:9561"/>
        <dbReference type="Rhea" id="RHEA-COMP:9562"/>
        <dbReference type="ChEBI" id="CHEBI:17757"/>
        <dbReference type="ChEBI" id="CHEBI:27787"/>
        <dbReference type="ChEBI" id="CHEBI:48717"/>
        <dbReference type="ChEBI" id="CHEBI:62192"/>
        <dbReference type="EC" id="1.3.5.5"/>
    </reaction>
</comment>
<comment type="cofactor">
    <cofactor evidence="1">
        <name>FAD</name>
        <dbReference type="ChEBI" id="CHEBI:57692"/>
    </cofactor>
</comment>
<comment type="pathway">
    <text>Carotenoid biosynthesis; lycopene biosynthesis.</text>
</comment>
<comment type="subunit">
    <text evidence="1">Homotetramer.</text>
</comment>
<comment type="subcellular location">
    <subcellularLocation>
        <location evidence="2">Plastid</location>
        <location evidence="2">Chloroplast</location>
    </subcellularLocation>
    <subcellularLocation>
        <location evidence="2">Plastid</location>
        <location evidence="2">Chromoplast</location>
    </subcellularLocation>
    <subcellularLocation>
        <location evidence="1">Membrane</location>
        <topology evidence="1">Peripheral membrane protein</topology>
    </subcellularLocation>
</comment>
<comment type="tissue specificity">
    <text evidence="4 5">Expressed in flower buds and lips. Lower expression in leaves and roots.</text>
</comment>
<comment type="developmental stage">
    <text evidence="5">Expressed during floral development.</text>
</comment>
<comment type="similarity">
    <text evidence="7">Belongs to the carotenoid/retinoid oxidoreductase family.</text>
</comment>
<dbReference type="EC" id="1.3.5.5" evidence="1"/>
<dbReference type="EMBL" id="FJ859989">
    <property type="protein sequence ID" value="ACP27624.1"/>
    <property type="molecule type" value="mRNA"/>
</dbReference>
<dbReference type="EMBL" id="AY973632">
    <property type="protein sequence ID" value="AAX84687.1"/>
    <property type="molecule type" value="mRNA"/>
</dbReference>
<dbReference type="SMR" id="C3VEP9"/>
<dbReference type="UniPathway" id="UPA00803"/>
<dbReference type="GO" id="GO:0009507">
    <property type="term" value="C:chloroplast"/>
    <property type="evidence" value="ECO:0000250"/>
    <property type="project" value="UniProtKB"/>
</dbReference>
<dbReference type="GO" id="GO:0009534">
    <property type="term" value="C:chloroplast thylakoid"/>
    <property type="evidence" value="ECO:0007669"/>
    <property type="project" value="TreeGrafter"/>
</dbReference>
<dbReference type="GO" id="GO:0009509">
    <property type="term" value="C:chromoplast"/>
    <property type="evidence" value="ECO:0000250"/>
    <property type="project" value="UniProtKB"/>
</dbReference>
<dbReference type="GO" id="GO:0016020">
    <property type="term" value="C:membrane"/>
    <property type="evidence" value="ECO:0007669"/>
    <property type="project" value="UniProtKB-SubCell"/>
</dbReference>
<dbReference type="GO" id="GO:0071949">
    <property type="term" value="F:FAD binding"/>
    <property type="evidence" value="ECO:0000250"/>
    <property type="project" value="UniProtKB"/>
</dbReference>
<dbReference type="GO" id="GO:0016166">
    <property type="term" value="F:phytoene dehydrogenase activity"/>
    <property type="evidence" value="ECO:0000250"/>
    <property type="project" value="UniProtKB"/>
</dbReference>
<dbReference type="GO" id="GO:0016120">
    <property type="term" value="P:carotene biosynthetic process"/>
    <property type="evidence" value="ECO:0000250"/>
    <property type="project" value="UniProtKB"/>
</dbReference>
<dbReference type="GO" id="GO:0016117">
    <property type="term" value="P:carotenoid biosynthetic process"/>
    <property type="evidence" value="ECO:0007669"/>
    <property type="project" value="UniProtKB-KW"/>
</dbReference>
<dbReference type="GO" id="GO:0051289">
    <property type="term" value="P:protein homotetramerization"/>
    <property type="evidence" value="ECO:0000250"/>
    <property type="project" value="UniProtKB"/>
</dbReference>
<dbReference type="FunFam" id="3.50.50.60:FF:000091">
    <property type="entry name" value="15-cis-phytoene desaturase, chloroplastic/chromoplastic"/>
    <property type="match status" value="1"/>
</dbReference>
<dbReference type="Gene3D" id="3.50.50.60">
    <property type="entry name" value="FAD/NAD(P)-binding domain"/>
    <property type="match status" value="1"/>
</dbReference>
<dbReference type="InterPro" id="IPR002937">
    <property type="entry name" value="Amino_oxidase"/>
</dbReference>
<dbReference type="InterPro" id="IPR036188">
    <property type="entry name" value="FAD/NAD-bd_sf"/>
</dbReference>
<dbReference type="InterPro" id="IPR001613">
    <property type="entry name" value="Flavin_amine_oxidase"/>
</dbReference>
<dbReference type="InterPro" id="IPR014102">
    <property type="entry name" value="Phytoene_desaturase"/>
</dbReference>
<dbReference type="InterPro" id="IPR050464">
    <property type="entry name" value="Zeta_carotene_desat/Oxidored"/>
</dbReference>
<dbReference type="NCBIfam" id="TIGR02731">
    <property type="entry name" value="phytoene_desat"/>
    <property type="match status" value="1"/>
</dbReference>
<dbReference type="PANTHER" id="PTHR42923:SF45">
    <property type="entry name" value="15-CIS-PHYTOENE DESATURASE, CHLOROPLASTIC_CHROMOPLASTIC"/>
    <property type="match status" value="1"/>
</dbReference>
<dbReference type="PANTHER" id="PTHR42923">
    <property type="entry name" value="PROTOPORPHYRINOGEN OXIDASE"/>
    <property type="match status" value="1"/>
</dbReference>
<dbReference type="Pfam" id="PF01593">
    <property type="entry name" value="Amino_oxidase"/>
    <property type="match status" value="1"/>
</dbReference>
<dbReference type="PRINTS" id="PR00757">
    <property type="entry name" value="AMINEOXDASEF"/>
</dbReference>
<dbReference type="SUPFAM" id="SSF51905">
    <property type="entry name" value="FAD/NAD(P)-binding domain"/>
    <property type="match status" value="1"/>
</dbReference>
<sequence length="582" mass="65356">MNLLGSISTGFPCISLHKKSLRDENPARKRLIDMDPRWNKLRASRSSDYMGCIFEVPLLGFSKVKSSSANGSMQVFCMDYPRPELENTINFLEAAKLSASFRDSIRPKKPLEVVIAGAGLAGLSTAKYLADAGHKPILLEARDVLGGKIAAWKDKDGDFYETGLHIFFGAYPNVQNLFGELGINDRLQWKEHSMIFAMPNKPGEFSRFDFPDVLPAPFNGIWAILRNNEMLTWSEKVKFAIGLLPAMVGGQSYVEAQDSLTVKEWMKRQGVPVRVNDEVFIAMSKALNFINPDELSMQCILIALNRFLQEKHGSKIAFLDGNPPERLCMPIVEHIRSLGGQVELNSRVQKIELNSDRTVKKFVLNNGSVITGDAYVFATPVDILKLLLPEEWKEISCFQRLNKLAGVPVINVHLWFDRKLKNTYDHLLFSRSPLLSVYADMSVTCKEYYDPNRSMLELVFAPADEWISRSDSDIVDATLKELAKLFPNEIAADQSKAKLLKYHVVKTPRSVYKTVPNCEPCRPLQRTPIKGFYLAGDYTKQKYLASMEGAVLSGKLCAQAIVQDYDKLVSTAVGDQSAEMFV</sequence>
<accession>C3VEP9</accession>
<accession>Q52QW4</accession>
<reference key="1">
    <citation type="journal article" date="2010" name="Planta">
        <title>Differential expression of carotenoid-related genes determines diversified carotenoid coloration in floral tissues of Oncidium cultivars.</title>
        <authorList>
            <person name="Chiou C.Y."/>
            <person name="Pan H.A."/>
            <person name="Chuang Y.N."/>
            <person name="Yeh K.W."/>
        </authorList>
    </citation>
    <scope>NUCLEOTIDE SEQUENCE [MRNA]</scope>
    <scope>DEVELOPMENTAL STAGE</scope>
    <scope>TISSUE SPECIFICITY</scope>
</reference>
<reference key="2">
    <citation type="journal article" date="2006" name="Planta">
        <title>Color genes in the orchid Oncidium Gower Ramsey: identification, expression, and potential genetic instability in an interspecific cross.</title>
        <authorList>
            <person name="Hieber A.D."/>
            <person name="Mudalige-Jayawickrama R.G."/>
            <person name="Kuehnle A.R."/>
        </authorList>
    </citation>
    <scope>NUCLEOTIDE SEQUENCE [MRNA] OF 167-444</scope>
    <scope>TISSUE SPECIFICITY</scope>
</reference>
<name>PDS_ONCHC</name>
<feature type="transit peptide" description="Chloroplast and chromoplast" evidence="3">
    <location>
        <begin position="1"/>
        <end position="93"/>
    </location>
</feature>
<feature type="chain" id="PRO_0000426708" description="15-cis-phytoene desaturase, chloroplastic/chromoplastic">
    <location>
        <begin position="94"/>
        <end position="582"/>
    </location>
</feature>
<feature type="binding site" evidence="1">
    <location>
        <position position="121"/>
    </location>
    <ligand>
        <name>FAD</name>
        <dbReference type="ChEBI" id="CHEBI:57692"/>
    </ligand>
</feature>
<feature type="binding site" evidence="1">
    <location>
        <begin position="140"/>
        <end position="141"/>
    </location>
    <ligand>
        <name>FAD</name>
        <dbReference type="ChEBI" id="CHEBI:57692"/>
    </ligand>
</feature>
<feature type="binding site" evidence="1">
    <location>
        <position position="148"/>
    </location>
    <ligand>
        <name>FAD</name>
        <dbReference type="ChEBI" id="CHEBI:57692"/>
    </ligand>
</feature>
<feature type="binding site" evidence="1">
    <location>
        <begin position="165"/>
        <end position="166"/>
    </location>
    <ligand>
        <name>FAD</name>
        <dbReference type="ChEBI" id="CHEBI:57692"/>
    </ligand>
</feature>
<feature type="binding site" evidence="1">
    <location>
        <position position="171"/>
    </location>
    <ligand>
        <name>FAD</name>
        <dbReference type="ChEBI" id="CHEBI:57692"/>
    </ligand>
</feature>
<feature type="binding site" evidence="1">
    <location>
        <position position="306"/>
    </location>
    <ligand>
        <name>substrate</name>
    </ligand>
</feature>
<feature type="binding site" evidence="1">
    <location>
        <position position="537"/>
    </location>
    <ligand>
        <name>FAD</name>
        <dbReference type="ChEBI" id="CHEBI:57692"/>
    </ligand>
</feature>
<feature type="binding site" evidence="1">
    <location>
        <position position="545"/>
    </location>
    <ligand>
        <name>substrate</name>
    </ligand>
</feature>
<feature type="binding site" evidence="1">
    <location>
        <position position="547"/>
    </location>
    <ligand>
        <name>FAD</name>
        <dbReference type="ChEBI" id="CHEBI:57692"/>
    </ligand>
</feature>
<gene>
    <name type="primary">PDS</name>
</gene>
<proteinExistence type="evidence at transcript level"/>